<proteinExistence type="inferred from homology"/>
<protein>
    <recommendedName>
        <fullName evidence="1">DNA-directed RNA polymerase subunit omega</fullName>
        <shortName evidence="1">RNAP omega subunit</shortName>
        <ecNumber evidence="1">2.7.7.6</ecNumber>
    </recommendedName>
    <alternativeName>
        <fullName evidence="1">RNA polymerase omega subunit</fullName>
    </alternativeName>
    <alternativeName>
        <fullName evidence="1">Transcriptase subunit omega</fullName>
    </alternativeName>
</protein>
<name>RPOZ_STAS1</name>
<accession>Q49WZ2</accession>
<reference key="1">
    <citation type="journal article" date="2005" name="Proc. Natl. Acad. Sci. U.S.A.">
        <title>Whole genome sequence of Staphylococcus saprophyticus reveals the pathogenesis of uncomplicated urinary tract infection.</title>
        <authorList>
            <person name="Kuroda M."/>
            <person name="Yamashita A."/>
            <person name="Hirakawa H."/>
            <person name="Kumano M."/>
            <person name="Morikawa K."/>
            <person name="Higashide M."/>
            <person name="Maruyama A."/>
            <person name="Inose Y."/>
            <person name="Matoba K."/>
            <person name="Toh H."/>
            <person name="Kuhara S."/>
            <person name="Hattori M."/>
            <person name="Ohta T."/>
        </authorList>
    </citation>
    <scope>NUCLEOTIDE SEQUENCE [LARGE SCALE GENOMIC DNA]</scope>
    <source>
        <strain>ATCC 15305 / DSM 20229 / NCIMB 8711 / NCTC 7292 / S-41</strain>
    </source>
</reference>
<organism>
    <name type="scientific">Staphylococcus saprophyticus subsp. saprophyticus (strain ATCC 15305 / DSM 20229 / NCIMB 8711 / NCTC 7292 / S-41)</name>
    <dbReference type="NCBI Taxonomy" id="342451"/>
    <lineage>
        <taxon>Bacteria</taxon>
        <taxon>Bacillati</taxon>
        <taxon>Bacillota</taxon>
        <taxon>Bacilli</taxon>
        <taxon>Bacillales</taxon>
        <taxon>Staphylococcaceae</taxon>
        <taxon>Staphylococcus</taxon>
    </lineage>
</organism>
<comment type="function">
    <text evidence="1">Promotes RNA polymerase assembly. Latches the N- and C-terminal regions of the beta' subunit thereby facilitating its interaction with the beta and alpha subunits.</text>
</comment>
<comment type="catalytic activity">
    <reaction evidence="1">
        <text>RNA(n) + a ribonucleoside 5'-triphosphate = RNA(n+1) + diphosphate</text>
        <dbReference type="Rhea" id="RHEA:21248"/>
        <dbReference type="Rhea" id="RHEA-COMP:14527"/>
        <dbReference type="Rhea" id="RHEA-COMP:17342"/>
        <dbReference type="ChEBI" id="CHEBI:33019"/>
        <dbReference type="ChEBI" id="CHEBI:61557"/>
        <dbReference type="ChEBI" id="CHEBI:140395"/>
        <dbReference type="EC" id="2.7.7.6"/>
    </reaction>
</comment>
<comment type="subunit">
    <text evidence="1">The RNAP catalytic core consists of 2 alpha, 1 beta, 1 beta' and 1 omega subunit. When a sigma factor is associated with the core the holoenzyme is formed, which can initiate transcription.</text>
</comment>
<comment type="similarity">
    <text evidence="1">Belongs to the RNA polymerase subunit omega family.</text>
</comment>
<evidence type="ECO:0000255" key="1">
    <source>
        <dbReference type="HAMAP-Rule" id="MF_00366"/>
    </source>
</evidence>
<feature type="chain" id="PRO_0000128986" description="DNA-directed RNA polymerase subunit omega">
    <location>
        <begin position="1"/>
        <end position="70"/>
    </location>
</feature>
<sequence>MLQPPLNQLTSKINSKYLIATTAAKRAREIDEKPESALLTKYISEKPVGKALEEIADGVVFPDELFLKTY</sequence>
<keyword id="KW-0240">DNA-directed RNA polymerase</keyword>
<keyword id="KW-0548">Nucleotidyltransferase</keyword>
<keyword id="KW-1185">Reference proteome</keyword>
<keyword id="KW-0804">Transcription</keyword>
<keyword id="KW-0808">Transferase</keyword>
<dbReference type="EC" id="2.7.7.6" evidence="1"/>
<dbReference type="EMBL" id="AP008934">
    <property type="protein sequence ID" value="BAE18706.1"/>
    <property type="molecule type" value="Genomic_DNA"/>
</dbReference>
<dbReference type="RefSeq" id="WP_011303303.1">
    <property type="nucleotide sequence ID" value="NC_007350.1"/>
</dbReference>
<dbReference type="SMR" id="Q49WZ2"/>
<dbReference type="GeneID" id="3615305"/>
<dbReference type="KEGG" id="ssp:SSP1561"/>
<dbReference type="PATRIC" id="fig|342451.11.peg.1563"/>
<dbReference type="eggNOG" id="COG1758">
    <property type="taxonomic scope" value="Bacteria"/>
</dbReference>
<dbReference type="HOGENOM" id="CLU_125406_6_0_9"/>
<dbReference type="OrthoDB" id="9815459at2"/>
<dbReference type="Proteomes" id="UP000006371">
    <property type="component" value="Chromosome"/>
</dbReference>
<dbReference type="GO" id="GO:0000428">
    <property type="term" value="C:DNA-directed RNA polymerase complex"/>
    <property type="evidence" value="ECO:0007669"/>
    <property type="project" value="UniProtKB-KW"/>
</dbReference>
<dbReference type="GO" id="GO:0003677">
    <property type="term" value="F:DNA binding"/>
    <property type="evidence" value="ECO:0007669"/>
    <property type="project" value="UniProtKB-UniRule"/>
</dbReference>
<dbReference type="GO" id="GO:0003899">
    <property type="term" value="F:DNA-directed RNA polymerase activity"/>
    <property type="evidence" value="ECO:0007669"/>
    <property type="project" value="UniProtKB-UniRule"/>
</dbReference>
<dbReference type="GO" id="GO:0006351">
    <property type="term" value="P:DNA-templated transcription"/>
    <property type="evidence" value="ECO:0007669"/>
    <property type="project" value="UniProtKB-UniRule"/>
</dbReference>
<dbReference type="Gene3D" id="3.90.940.10">
    <property type="match status" value="1"/>
</dbReference>
<dbReference type="HAMAP" id="MF_00366">
    <property type="entry name" value="RNApol_bact_RpoZ"/>
    <property type="match status" value="1"/>
</dbReference>
<dbReference type="InterPro" id="IPR003716">
    <property type="entry name" value="DNA-dir_RNA_pol_omega"/>
</dbReference>
<dbReference type="InterPro" id="IPR006110">
    <property type="entry name" value="Pol_omega/Rpo6/RPB6"/>
</dbReference>
<dbReference type="InterPro" id="IPR036161">
    <property type="entry name" value="RPB6/omega-like_sf"/>
</dbReference>
<dbReference type="NCBIfam" id="TIGR00690">
    <property type="entry name" value="rpoZ"/>
    <property type="match status" value="1"/>
</dbReference>
<dbReference type="PANTHER" id="PTHR34476">
    <property type="entry name" value="DNA-DIRECTED RNA POLYMERASE SUBUNIT OMEGA"/>
    <property type="match status" value="1"/>
</dbReference>
<dbReference type="PANTHER" id="PTHR34476:SF1">
    <property type="entry name" value="DNA-DIRECTED RNA POLYMERASE SUBUNIT OMEGA"/>
    <property type="match status" value="1"/>
</dbReference>
<dbReference type="Pfam" id="PF01192">
    <property type="entry name" value="RNA_pol_Rpb6"/>
    <property type="match status" value="1"/>
</dbReference>
<dbReference type="SMART" id="SM01409">
    <property type="entry name" value="RNA_pol_Rpb6"/>
    <property type="match status" value="1"/>
</dbReference>
<dbReference type="SUPFAM" id="SSF63562">
    <property type="entry name" value="RPB6/omega subunit-like"/>
    <property type="match status" value="1"/>
</dbReference>
<gene>
    <name evidence="1" type="primary">rpoZ</name>
    <name type="ordered locus">SSP1561</name>
</gene>